<dbReference type="EMBL" id="BA000037">
    <property type="protein sequence ID" value="BAC93584.1"/>
    <property type="molecule type" value="Genomic_DNA"/>
</dbReference>
<dbReference type="RefSeq" id="WP_011078464.1">
    <property type="nucleotide sequence ID" value="NC_005139.1"/>
</dbReference>
<dbReference type="SMR" id="Q7MN97"/>
<dbReference type="STRING" id="672.VV93_v1c07610"/>
<dbReference type="KEGG" id="vvy:VV0820"/>
<dbReference type="eggNOG" id="COG2914">
    <property type="taxonomic scope" value="Bacteria"/>
</dbReference>
<dbReference type="HOGENOM" id="CLU_150721_1_0_6"/>
<dbReference type="Proteomes" id="UP000002675">
    <property type="component" value="Chromosome I"/>
</dbReference>
<dbReference type="Gene3D" id="3.10.20.280">
    <property type="entry name" value="RnfH-like"/>
    <property type="match status" value="1"/>
</dbReference>
<dbReference type="HAMAP" id="MF_00460">
    <property type="entry name" value="UPF0125_RnfH"/>
    <property type="match status" value="1"/>
</dbReference>
<dbReference type="InterPro" id="IPR016155">
    <property type="entry name" value="Mopterin_synth/thiamin_S_b"/>
</dbReference>
<dbReference type="InterPro" id="IPR005346">
    <property type="entry name" value="RnfH"/>
</dbReference>
<dbReference type="InterPro" id="IPR037021">
    <property type="entry name" value="RnfH_sf"/>
</dbReference>
<dbReference type="NCBIfam" id="NF002490">
    <property type="entry name" value="PRK01777.1"/>
    <property type="match status" value="1"/>
</dbReference>
<dbReference type="PANTHER" id="PTHR37483">
    <property type="entry name" value="UPF0125 PROTEIN RATB"/>
    <property type="match status" value="1"/>
</dbReference>
<dbReference type="PANTHER" id="PTHR37483:SF1">
    <property type="entry name" value="UPF0125 PROTEIN RATB"/>
    <property type="match status" value="1"/>
</dbReference>
<dbReference type="Pfam" id="PF03658">
    <property type="entry name" value="Ub-RnfH"/>
    <property type="match status" value="1"/>
</dbReference>
<dbReference type="SUPFAM" id="SSF54285">
    <property type="entry name" value="MoaD/ThiS"/>
    <property type="match status" value="1"/>
</dbReference>
<proteinExistence type="inferred from homology"/>
<reference key="1">
    <citation type="journal article" date="2003" name="Genome Res.">
        <title>Comparative genome analysis of Vibrio vulnificus, a marine pathogen.</title>
        <authorList>
            <person name="Chen C.-Y."/>
            <person name="Wu K.-M."/>
            <person name="Chang Y.-C."/>
            <person name="Chang C.-H."/>
            <person name="Tsai H.-C."/>
            <person name="Liao T.-L."/>
            <person name="Liu Y.-M."/>
            <person name="Chen H.-J."/>
            <person name="Shen A.B.-T."/>
            <person name="Li J.-C."/>
            <person name="Su T.-L."/>
            <person name="Shao C.-P."/>
            <person name="Lee C.-T."/>
            <person name="Hor L.-I."/>
            <person name="Tsai S.-F."/>
        </authorList>
    </citation>
    <scope>NUCLEOTIDE SEQUENCE [LARGE SCALE GENOMIC DNA]</scope>
    <source>
        <strain>YJ016</strain>
    </source>
</reference>
<organism>
    <name type="scientific">Vibrio vulnificus (strain YJ016)</name>
    <dbReference type="NCBI Taxonomy" id="196600"/>
    <lineage>
        <taxon>Bacteria</taxon>
        <taxon>Pseudomonadati</taxon>
        <taxon>Pseudomonadota</taxon>
        <taxon>Gammaproteobacteria</taxon>
        <taxon>Vibrionales</taxon>
        <taxon>Vibrionaceae</taxon>
        <taxon>Vibrio</taxon>
    </lineage>
</organism>
<evidence type="ECO:0000255" key="1">
    <source>
        <dbReference type="HAMAP-Rule" id="MF_00460"/>
    </source>
</evidence>
<evidence type="ECO:0000256" key="2">
    <source>
        <dbReference type="SAM" id="MobiDB-lite"/>
    </source>
</evidence>
<sequence>MSIESEMIHVEVVYALPQEQRVLTLVVNQQATVEEIIRQSGVLEIYPEIDLGKNKVGVFSRLVKLDATVRDKDRIEIYRPLLADPKEIRRKRAEQAKESGAADPVTGGKPSPLRKAD</sequence>
<gene>
    <name type="ordered locus">VV0820</name>
</gene>
<comment type="similarity">
    <text evidence="1">Belongs to the UPF0125 (RnfH) family.</text>
</comment>
<accession>Q7MN97</accession>
<feature type="chain" id="PRO_0000192505" description="UPF0125 protein VV0820">
    <location>
        <begin position="1"/>
        <end position="117"/>
    </location>
</feature>
<feature type="region of interest" description="Disordered" evidence="2">
    <location>
        <begin position="90"/>
        <end position="117"/>
    </location>
</feature>
<name>Y820_VIBVY</name>
<protein>
    <recommendedName>
        <fullName evidence="1">UPF0125 protein VV0820</fullName>
    </recommendedName>
</protein>